<evidence type="ECO:0000255" key="1">
    <source>
        <dbReference type="HAMAP-Rule" id="MF_02000"/>
    </source>
</evidence>
<evidence type="ECO:0000255" key="2">
    <source>
        <dbReference type="PROSITE-ProRule" id="PRU00285"/>
    </source>
</evidence>
<name>IBPA_YERPB</name>
<sequence>MRNSDLAPLYRSAIGFDRLFNLLESGQNQSNGGYPPYNVELVDENNYRIAIAVAGFAEQELEITTQDNLLIVRGSHANEPAQRTYLYQGIAERNFERKFQLAEHIKIKGANLVNGLLYIDLERLVPESLKPRRIEIK</sequence>
<dbReference type="EMBL" id="CP001048">
    <property type="protein sequence ID" value="ACC91067.1"/>
    <property type="molecule type" value="Genomic_DNA"/>
</dbReference>
<dbReference type="RefSeq" id="WP_002209636.1">
    <property type="nucleotide sequence ID" value="NZ_CP009780.1"/>
</dbReference>
<dbReference type="SMR" id="B2K7E5"/>
<dbReference type="GeneID" id="96663430"/>
<dbReference type="KEGG" id="ypb:YPTS_4121"/>
<dbReference type="PATRIC" id="fig|502801.10.peg.3596"/>
<dbReference type="GO" id="GO:0005737">
    <property type="term" value="C:cytoplasm"/>
    <property type="evidence" value="ECO:0007669"/>
    <property type="project" value="UniProtKB-SubCell"/>
</dbReference>
<dbReference type="GO" id="GO:0050821">
    <property type="term" value="P:protein stabilization"/>
    <property type="evidence" value="ECO:0007669"/>
    <property type="project" value="UniProtKB-UniRule"/>
</dbReference>
<dbReference type="CDD" id="cd06470">
    <property type="entry name" value="ACD_IbpA-B_like"/>
    <property type="match status" value="1"/>
</dbReference>
<dbReference type="FunFam" id="2.60.40.790:FF:000002">
    <property type="entry name" value="Small heat shock protein IbpA"/>
    <property type="match status" value="1"/>
</dbReference>
<dbReference type="Gene3D" id="2.60.40.790">
    <property type="match status" value="1"/>
</dbReference>
<dbReference type="HAMAP" id="MF_02000">
    <property type="entry name" value="HSP20_IbpA"/>
    <property type="match status" value="1"/>
</dbReference>
<dbReference type="InterPro" id="IPR002068">
    <property type="entry name" value="A-crystallin/Hsp20_dom"/>
</dbReference>
<dbReference type="InterPro" id="IPR037913">
    <property type="entry name" value="ACD_IbpA/B"/>
</dbReference>
<dbReference type="InterPro" id="IPR008978">
    <property type="entry name" value="HSP20-like_chaperone"/>
</dbReference>
<dbReference type="InterPro" id="IPR023728">
    <property type="entry name" value="HSP20_IbpA"/>
</dbReference>
<dbReference type="NCBIfam" id="NF008013">
    <property type="entry name" value="PRK10743.1"/>
    <property type="match status" value="1"/>
</dbReference>
<dbReference type="PANTHER" id="PTHR47062">
    <property type="match status" value="1"/>
</dbReference>
<dbReference type="PANTHER" id="PTHR47062:SF1">
    <property type="entry name" value="SMALL HEAT SHOCK PROTEIN IBPA"/>
    <property type="match status" value="1"/>
</dbReference>
<dbReference type="Pfam" id="PF00011">
    <property type="entry name" value="HSP20"/>
    <property type="match status" value="1"/>
</dbReference>
<dbReference type="SUPFAM" id="SSF49764">
    <property type="entry name" value="HSP20-like chaperones"/>
    <property type="match status" value="1"/>
</dbReference>
<dbReference type="PROSITE" id="PS01031">
    <property type="entry name" value="SHSP"/>
    <property type="match status" value="1"/>
</dbReference>
<protein>
    <recommendedName>
        <fullName evidence="1">Small heat shock protein IbpA</fullName>
    </recommendedName>
    <alternativeName>
        <fullName evidence="1">16 kDa heat shock protein A</fullName>
    </alternativeName>
</protein>
<organism>
    <name type="scientific">Yersinia pseudotuberculosis serotype IB (strain PB1/+)</name>
    <dbReference type="NCBI Taxonomy" id="502801"/>
    <lineage>
        <taxon>Bacteria</taxon>
        <taxon>Pseudomonadati</taxon>
        <taxon>Pseudomonadota</taxon>
        <taxon>Gammaproteobacteria</taxon>
        <taxon>Enterobacterales</taxon>
        <taxon>Yersiniaceae</taxon>
        <taxon>Yersinia</taxon>
    </lineage>
</organism>
<keyword id="KW-0143">Chaperone</keyword>
<keyword id="KW-0963">Cytoplasm</keyword>
<keyword id="KW-0346">Stress response</keyword>
<reference key="1">
    <citation type="submission" date="2008-04" db="EMBL/GenBank/DDBJ databases">
        <title>Complete sequence of Yersinia pseudotuberculosis PB1/+.</title>
        <authorList>
            <person name="Copeland A."/>
            <person name="Lucas S."/>
            <person name="Lapidus A."/>
            <person name="Glavina del Rio T."/>
            <person name="Dalin E."/>
            <person name="Tice H."/>
            <person name="Bruce D."/>
            <person name="Goodwin L."/>
            <person name="Pitluck S."/>
            <person name="Munk A.C."/>
            <person name="Brettin T."/>
            <person name="Detter J.C."/>
            <person name="Han C."/>
            <person name="Tapia R."/>
            <person name="Schmutz J."/>
            <person name="Larimer F."/>
            <person name="Land M."/>
            <person name="Hauser L."/>
            <person name="Challacombe J.F."/>
            <person name="Green L."/>
            <person name="Lindler L.E."/>
            <person name="Nikolich M.P."/>
            <person name="Richardson P."/>
        </authorList>
    </citation>
    <scope>NUCLEOTIDE SEQUENCE [LARGE SCALE GENOMIC DNA]</scope>
    <source>
        <strain>PB1/+</strain>
    </source>
</reference>
<proteinExistence type="inferred from homology"/>
<feature type="chain" id="PRO_1000189092" description="Small heat shock protein IbpA">
    <location>
        <begin position="1"/>
        <end position="137"/>
    </location>
</feature>
<feature type="domain" description="sHSP" evidence="2">
    <location>
        <begin position="28"/>
        <end position="137"/>
    </location>
</feature>
<comment type="function">
    <text evidence="1">Associates with aggregated proteins, together with IbpB, to stabilize and protect them from irreversible denaturation and extensive proteolysis during heat shock and oxidative stress. Aggregated proteins bound to the IbpAB complex are more efficiently refolded and reactivated by the ATP-dependent chaperone systems ClpB and DnaK/DnaJ/GrpE. Its activity is ATP-independent.</text>
</comment>
<comment type="subunit">
    <text evidence="1">Monomer. Forms homomultimers of about 100-150 subunits at optimal growth temperatures. Conformation changes to monomers at high temperatures or high ionic concentrations.</text>
</comment>
<comment type="subcellular location">
    <subcellularLocation>
        <location evidence="1">Cytoplasm</location>
    </subcellularLocation>
</comment>
<comment type="similarity">
    <text evidence="1 2">Belongs to the small heat shock protein (HSP20) family.</text>
</comment>
<gene>
    <name evidence="1" type="primary">ibpA</name>
    <name type="ordered locus">YPTS_4121</name>
</gene>
<accession>B2K7E5</accession>